<dbReference type="EMBL" id="CP000471">
    <property type="protein sequence ID" value="ABK42532.1"/>
    <property type="molecule type" value="Genomic_DNA"/>
</dbReference>
<dbReference type="RefSeq" id="WP_011711706.1">
    <property type="nucleotide sequence ID" value="NC_008576.1"/>
</dbReference>
<dbReference type="SMR" id="A0L3I9"/>
<dbReference type="STRING" id="156889.Mmc1_0003"/>
<dbReference type="KEGG" id="mgm:Mmc1_0003"/>
<dbReference type="eggNOG" id="COG1195">
    <property type="taxonomic scope" value="Bacteria"/>
</dbReference>
<dbReference type="HOGENOM" id="CLU_040267_0_1_5"/>
<dbReference type="OrthoDB" id="9803889at2"/>
<dbReference type="Proteomes" id="UP000002586">
    <property type="component" value="Chromosome"/>
</dbReference>
<dbReference type="GO" id="GO:0005737">
    <property type="term" value="C:cytoplasm"/>
    <property type="evidence" value="ECO:0007669"/>
    <property type="project" value="UniProtKB-SubCell"/>
</dbReference>
<dbReference type="GO" id="GO:0005524">
    <property type="term" value="F:ATP binding"/>
    <property type="evidence" value="ECO:0007669"/>
    <property type="project" value="UniProtKB-UniRule"/>
</dbReference>
<dbReference type="GO" id="GO:0003697">
    <property type="term" value="F:single-stranded DNA binding"/>
    <property type="evidence" value="ECO:0007669"/>
    <property type="project" value="UniProtKB-UniRule"/>
</dbReference>
<dbReference type="GO" id="GO:0006260">
    <property type="term" value="P:DNA replication"/>
    <property type="evidence" value="ECO:0007669"/>
    <property type="project" value="UniProtKB-UniRule"/>
</dbReference>
<dbReference type="GO" id="GO:0000731">
    <property type="term" value="P:DNA synthesis involved in DNA repair"/>
    <property type="evidence" value="ECO:0007669"/>
    <property type="project" value="TreeGrafter"/>
</dbReference>
<dbReference type="GO" id="GO:0006302">
    <property type="term" value="P:double-strand break repair"/>
    <property type="evidence" value="ECO:0007669"/>
    <property type="project" value="TreeGrafter"/>
</dbReference>
<dbReference type="GO" id="GO:0009432">
    <property type="term" value="P:SOS response"/>
    <property type="evidence" value="ECO:0007669"/>
    <property type="project" value="UniProtKB-UniRule"/>
</dbReference>
<dbReference type="Gene3D" id="3.40.50.300">
    <property type="entry name" value="P-loop containing nucleotide triphosphate hydrolases"/>
    <property type="match status" value="1"/>
</dbReference>
<dbReference type="Gene3D" id="1.20.1050.90">
    <property type="entry name" value="RecF/RecN/SMC, N-terminal domain"/>
    <property type="match status" value="1"/>
</dbReference>
<dbReference type="HAMAP" id="MF_00365">
    <property type="entry name" value="RecF"/>
    <property type="match status" value="1"/>
</dbReference>
<dbReference type="InterPro" id="IPR001238">
    <property type="entry name" value="DNA-binding_RecF"/>
</dbReference>
<dbReference type="InterPro" id="IPR018078">
    <property type="entry name" value="DNA-binding_RecF_CS"/>
</dbReference>
<dbReference type="InterPro" id="IPR027417">
    <property type="entry name" value="P-loop_NTPase"/>
</dbReference>
<dbReference type="InterPro" id="IPR003395">
    <property type="entry name" value="RecF/RecN/SMC_N"/>
</dbReference>
<dbReference type="InterPro" id="IPR042174">
    <property type="entry name" value="RecF_2"/>
</dbReference>
<dbReference type="NCBIfam" id="TIGR00611">
    <property type="entry name" value="recf"/>
    <property type="match status" value="1"/>
</dbReference>
<dbReference type="PANTHER" id="PTHR32182">
    <property type="entry name" value="DNA REPLICATION AND REPAIR PROTEIN RECF"/>
    <property type="match status" value="1"/>
</dbReference>
<dbReference type="PANTHER" id="PTHR32182:SF0">
    <property type="entry name" value="DNA REPLICATION AND REPAIR PROTEIN RECF"/>
    <property type="match status" value="1"/>
</dbReference>
<dbReference type="Pfam" id="PF02463">
    <property type="entry name" value="SMC_N"/>
    <property type="match status" value="1"/>
</dbReference>
<dbReference type="SUPFAM" id="SSF52540">
    <property type="entry name" value="P-loop containing nucleoside triphosphate hydrolases"/>
    <property type="match status" value="1"/>
</dbReference>
<dbReference type="PROSITE" id="PS00617">
    <property type="entry name" value="RECF_1"/>
    <property type="match status" value="1"/>
</dbReference>
<keyword id="KW-0067">ATP-binding</keyword>
<keyword id="KW-0963">Cytoplasm</keyword>
<keyword id="KW-0227">DNA damage</keyword>
<keyword id="KW-0234">DNA repair</keyword>
<keyword id="KW-0235">DNA replication</keyword>
<keyword id="KW-0238">DNA-binding</keyword>
<keyword id="KW-0547">Nucleotide-binding</keyword>
<keyword id="KW-1185">Reference proteome</keyword>
<keyword id="KW-0742">SOS response</keyword>
<gene>
    <name evidence="1" type="primary">recF</name>
    <name type="ordered locus">Mmc1_0003</name>
</gene>
<proteinExistence type="inferred from homology"/>
<name>RECF_MAGMM</name>
<protein>
    <recommendedName>
        <fullName evidence="1">DNA replication and repair protein RecF</fullName>
    </recommendedName>
</protein>
<organism>
    <name type="scientific">Magnetococcus marinus (strain ATCC BAA-1437 / JCM 17883 / MC-1)</name>
    <dbReference type="NCBI Taxonomy" id="156889"/>
    <lineage>
        <taxon>Bacteria</taxon>
        <taxon>Pseudomonadati</taxon>
        <taxon>Pseudomonadota</taxon>
        <taxon>Alphaproteobacteria</taxon>
        <taxon>Magnetococcales</taxon>
        <taxon>Magnetococcaceae</taxon>
        <taxon>Magnetococcus</taxon>
    </lineage>
</organism>
<evidence type="ECO:0000255" key="1">
    <source>
        <dbReference type="HAMAP-Rule" id="MF_00365"/>
    </source>
</evidence>
<feature type="chain" id="PRO_1000205497" description="DNA replication and repair protein RecF">
    <location>
        <begin position="1"/>
        <end position="382"/>
    </location>
</feature>
<feature type="binding site" evidence="1">
    <location>
        <begin position="30"/>
        <end position="37"/>
    </location>
    <ligand>
        <name>ATP</name>
        <dbReference type="ChEBI" id="CHEBI:30616"/>
    </ligand>
</feature>
<comment type="function">
    <text evidence="1">The RecF protein is involved in DNA metabolism; it is required for DNA replication and normal SOS inducibility. RecF binds preferentially to single-stranded, linear DNA. It also seems to bind ATP.</text>
</comment>
<comment type="subcellular location">
    <subcellularLocation>
        <location evidence="1">Cytoplasm</location>
    </subcellularLocation>
</comment>
<comment type="similarity">
    <text evidence="1">Belongs to the RecF family.</text>
</comment>
<reference key="1">
    <citation type="journal article" date="2009" name="Appl. Environ. Microbiol.">
        <title>Complete genome sequence of the chemolithoautotrophic marine magnetotactic coccus strain MC-1.</title>
        <authorList>
            <person name="Schubbe S."/>
            <person name="Williams T.J."/>
            <person name="Xie G."/>
            <person name="Kiss H.E."/>
            <person name="Brettin T.S."/>
            <person name="Martinez D."/>
            <person name="Ross C.A."/>
            <person name="Schuler D."/>
            <person name="Cox B.L."/>
            <person name="Nealson K.H."/>
            <person name="Bazylinski D.A."/>
        </authorList>
    </citation>
    <scope>NUCLEOTIDE SEQUENCE [LARGE SCALE GENOMIC DNA]</scope>
    <source>
        <strain>ATCC BAA-1437 / JCM 17883 / MC-1</strain>
    </source>
</reference>
<sequence length="382" mass="41978">MQLDRLTLRDFRNITEAELRFGPGLNLITGPNGHGKSNLLEAIGLLATGRSFRRAPAAALRRYGQPWFHLRGETTARDLGHRLEFFGQAGRQAVKINGKSASAASALGQALAAVIVTPDTLRLVQDGPGVRRGFVDWVAFTCGRQQGALSHAVVAGDYQKALKARNRLLKLPRVEAGEWLAWESQLATLGAKMARNRYQVLQRLQPHLDRMLEDLGMAQRLTITLSCQLDRHGTHWAEDESAAASLYRRLLAENRASERRSGGTAIGPHRDDLVLRLDGHALAQFGSQGQQKRAALALKLAEAQLLQEQLGEWPLFVLDDPAAELDTDGMSRLMGLLARCGGQIFVASCRAQTIPWSGLAPQRFYVDQGVFALTEEIPLESL</sequence>
<accession>A0L3I9</accession>